<proteinExistence type="evidence at protein level"/>
<organism>
    <name type="scientific">Saccharolobus solfataricus (strain ATCC 35092 / DSM 1617 / JCM 11322 / P2)</name>
    <name type="common">Sulfolobus solfataricus</name>
    <dbReference type="NCBI Taxonomy" id="273057"/>
    <lineage>
        <taxon>Archaea</taxon>
        <taxon>Thermoproteota</taxon>
        <taxon>Thermoprotei</taxon>
        <taxon>Sulfolobales</taxon>
        <taxon>Sulfolobaceae</taxon>
        <taxon>Saccharolobus</taxon>
    </lineage>
</organism>
<name>CMR6_SACS2</name>
<comment type="function">
    <text evidence="1 2">CRISPR (clustered regularly interspaced short palindromic repeat) is an adaptive immune system that provides protection against mobile genetic elements (viruses, transposable elements and conjugative plasmids). CRISPR clusters contain spacers, sequences complementary to antecedent mobile elements, and target invading nucleic acids. CRISPR clusters are transcribed and processed into CRISPR RNA (crRNA) (By similarity). The CMR complex degrades RNA complementary to the crRNA (target RNA) within UA dinucleotides, generating 3'-OH and 5'-phosphate ends. Activity is dependent on the 8 nt long 5' tag in the crRNA, an unpaired 3' flag on the target RNA, and is stimulated by ATP. Some cleavage of the guide crRNA can also be observed.</text>
</comment>
<comment type="subunit">
    <text evidence="2">Part of the CMR ribonucleoprotein complex, consisting of crRNA plus Cmr1/Cmr2/Cmr3/Cmr4/Cmr5/Cmr6 at 1:1 and possibly 3 Cmr7 dimers. A Cmr2/Cmr3/Cmr7 subcomplex without crRNA can also be isolated. It does not cleave target RNA.</text>
</comment>
<comment type="subcellular location">
    <subcellularLocation>
        <location evidence="2">Cytoplasm</location>
    </subcellularLocation>
</comment>
<comment type="similarity">
    <text evidence="3">Belongs to the CRISPR system Cmr6 family.</text>
</comment>
<gene>
    <name type="primary">cmr6</name>
    <name type="ordered locus">SSO1990</name>
</gene>
<reference key="1">
    <citation type="journal article" date="2001" name="Proc. Natl. Acad. Sci. U.S.A.">
        <title>The complete genome of the crenarchaeon Sulfolobus solfataricus P2.</title>
        <authorList>
            <person name="She Q."/>
            <person name="Singh R.K."/>
            <person name="Confalonieri F."/>
            <person name="Zivanovic Y."/>
            <person name="Allard G."/>
            <person name="Awayez M.J."/>
            <person name="Chan-Weiher C.C.-Y."/>
            <person name="Clausen I.G."/>
            <person name="Curtis B.A."/>
            <person name="De Moors A."/>
            <person name="Erauso G."/>
            <person name="Fletcher C."/>
            <person name="Gordon P.M.K."/>
            <person name="Heikamp-de Jong I."/>
            <person name="Jeffries A.C."/>
            <person name="Kozera C.J."/>
            <person name="Medina N."/>
            <person name="Peng X."/>
            <person name="Thi-Ngoc H.P."/>
            <person name="Redder P."/>
            <person name="Schenk M.E."/>
            <person name="Theriault C."/>
            <person name="Tolstrup N."/>
            <person name="Charlebois R.L."/>
            <person name="Doolittle W.F."/>
            <person name="Duguet M."/>
            <person name="Gaasterland T."/>
            <person name="Garrett R.A."/>
            <person name="Ragan M.A."/>
            <person name="Sensen C.W."/>
            <person name="Van der Oost J."/>
        </authorList>
    </citation>
    <scope>NUCLEOTIDE SEQUENCE [LARGE SCALE GENOMIC DNA]</scope>
    <source>
        <strain>ATCC 35092 / DSM 1617 / JCM 11322 / P2</strain>
    </source>
</reference>
<reference key="2">
    <citation type="journal article" date="2012" name="Mol. Cell">
        <title>Structure and mechanism of the CMR complex for CRISPR-mediated antiviral immunity.</title>
        <authorList>
            <person name="Zhang J."/>
            <person name="Rouillon C."/>
            <person name="Kerou M."/>
            <person name="Reeks J."/>
            <person name="Brugger K."/>
            <person name="Graham S."/>
            <person name="Reimann J."/>
            <person name="Cannone G."/>
            <person name="Liu H."/>
            <person name="Albers S.V."/>
            <person name="Naismith J.H."/>
            <person name="Spagnolo L."/>
            <person name="White M.F."/>
        </authorList>
    </citation>
    <scope>IDENTIFICATION BY MASS SPECTROMETRY</scope>
    <scope>FUNCTION IN CMR COMPLEX</scope>
    <scope>SUBUNIT</scope>
    <scope>SUBCELLULAR LOCATION</scope>
    <source>
        <strain>ATCC 35092 / DSM 1617 / JCM 11322 / P2</strain>
    </source>
</reference>
<protein>
    <recommendedName>
        <fullName>CRISPR system CMR subunit Cmr6</fullName>
    </recommendedName>
    <alternativeName>
        <fullName>CRISPR type III-B/RAMP module RAMP protein Cmr6</fullName>
    </alternativeName>
</protein>
<sequence>MKMSISTHLPRILDTLNRNNINLFSALSLTSIVYNNFGEFLSNKQSYSANNPLLKYQIIILKDKNKTKDVEEKKSLFKREIAELVSRNFKLEGEKVKKYFDNLKEILKSLKYTIVDFEITTRTRALIGVSTSLGKLIFDSGISFDPYMNLPYIPASEIKGIVRSYIEDKLGEQDAEEIFGNEEMEGNVNFTDAYPTRPENFLFVPDVITPHYNKKKSEADAEPKPAIHLTIAPKVSFRFLIYYKREDVGKPICDSLPLVIMKGLGARSSVGYSLFELSKIEVIR</sequence>
<dbReference type="EMBL" id="AE006641">
    <property type="protein sequence ID" value="AAK42180.1"/>
    <property type="molecule type" value="Genomic_DNA"/>
</dbReference>
<dbReference type="PIR" id="E90365">
    <property type="entry name" value="E90365"/>
</dbReference>
<dbReference type="RefSeq" id="WP_009992993.1">
    <property type="nucleotide sequence ID" value="NC_002754.1"/>
</dbReference>
<dbReference type="SMR" id="Q97WX1"/>
<dbReference type="STRING" id="273057.SSO1990"/>
<dbReference type="PaxDb" id="273057-SSO1990"/>
<dbReference type="EnsemblBacteria" id="AAK42180">
    <property type="protein sequence ID" value="AAK42180"/>
    <property type="gene ID" value="SSO1990"/>
</dbReference>
<dbReference type="GeneID" id="27428316"/>
<dbReference type="KEGG" id="sso:SSO1990"/>
<dbReference type="PATRIC" id="fig|273057.12.peg.2066"/>
<dbReference type="eggNOG" id="arCOG02661">
    <property type="taxonomic scope" value="Archaea"/>
</dbReference>
<dbReference type="HOGENOM" id="CLU_053305_3_0_2"/>
<dbReference type="InParanoid" id="Q97WX1"/>
<dbReference type="PhylomeDB" id="Q97WX1"/>
<dbReference type="Proteomes" id="UP000001974">
    <property type="component" value="Chromosome"/>
</dbReference>
<dbReference type="GO" id="GO:0005737">
    <property type="term" value="C:cytoplasm"/>
    <property type="evidence" value="ECO:0007669"/>
    <property type="project" value="UniProtKB-SubCell"/>
</dbReference>
<dbReference type="GO" id="GO:0051607">
    <property type="term" value="P:defense response to virus"/>
    <property type="evidence" value="ECO:0007669"/>
    <property type="project" value="UniProtKB-KW"/>
</dbReference>
<dbReference type="InterPro" id="IPR010172">
    <property type="entry name" value="CRISPR-assoc_prot_TM1791"/>
</dbReference>
<dbReference type="InterPro" id="IPR005537">
    <property type="entry name" value="RAMP_III_fam"/>
</dbReference>
<dbReference type="NCBIfam" id="TIGR01898">
    <property type="entry name" value="cas_TM1791_cmr6"/>
    <property type="match status" value="1"/>
</dbReference>
<dbReference type="PANTHER" id="PTHR39965">
    <property type="entry name" value="CRISPR SYSTEM CMR SUBUNIT CMR6"/>
    <property type="match status" value="1"/>
</dbReference>
<dbReference type="PANTHER" id="PTHR39965:SF1">
    <property type="entry name" value="CRISPR SYSTEM CMR SUBUNIT CMR6"/>
    <property type="match status" value="1"/>
</dbReference>
<dbReference type="Pfam" id="PF03787">
    <property type="entry name" value="RAMPs"/>
    <property type="match status" value="1"/>
</dbReference>
<keyword id="KW-0051">Antiviral defense</keyword>
<keyword id="KW-0963">Cytoplasm</keyword>
<keyword id="KW-1185">Reference proteome</keyword>
<evidence type="ECO:0000250" key="1"/>
<evidence type="ECO:0000269" key="2">
    <source>
    </source>
</evidence>
<evidence type="ECO:0000305" key="3"/>
<accession>Q97WX1</accession>
<feature type="chain" id="PRO_0000418082" description="CRISPR system CMR subunit Cmr6">
    <location>
        <begin position="1"/>
        <end position="284"/>
    </location>
</feature>